<sequence length="87" mass="9719">MSMLSFLLGEKKKTASVAKERLQIILARERVGGNGGGPDYLPALQKELMAVISKYVDIDVNDIKVHLERQENLEVLEVKIELPDASR</sequence>
<name>MINE_DELAS</name>
<dbReference type="EMBL" id="CP000884">
    <property type="protein sequence ID" value="ABX32740.1"/>
    <property type="molecule type" value="Genomic_DNA"/>
</dbReference>
<dbReference type="RefSeq" id="WP_012202033.1">
    <property type="nucleotide sequence ID" value="NC_010002.1"/>
</dbReference>
<dbReference type="SMR" id="A9BQN8"/>
<dbReference type="STRING" id="398578.Daci_0093"/>
<dbReference type="GeneID" id="94689390"/>
<dbReference type="KEGG" id="dac:Daci_0093"/>
<dbReference type="eggNOG" id="COG0851">
    <property type="taxonomic scope" value="Bacteria"/>
</dbReference>
<dbReference type="HOGENOM" id="CLU_137929_2_1_4"/>
<dbReference type="Proteomes" id="UP000000784">
    <property type="component" value="Chromosome"/>
</dbReference>
<dbReference type="GO" id="GO:0051301">
    <property type="term" value="P:cell division"/>
    <property type="evidence" value="ECO:0007669"/>
    <property type="project" value="UniProtKB-KW"/>
</dbReference>
<dbReference type="GO" id="GO:0032955">
    <property type="term" value="P:regulation of division septum assembly"/>
    <property type="evidence" value="ECO:0007669"/>
    <property type="project" value="InterPro"/>
</dbReference>
<dbReference type="FunFam" id="3.30.1070.10:FF:000001">
    <property type="entry name" value="Cell division topological specificity factor"/>
    <property type="match status" value="1"/>
</dbReference>
<dbReference type="Gene3D" id="3.30.1070.10">
    <property type="entry name" value="Cell division topological specificity factor MinE"/>
    <property type="match status" value="1"/>
</dbReference>
<dbReference type="HAMAP" id="MF_00262">
    <property type="entry name" value="MinE"/>
    <property type="match status" value="1"/>
</dbReference>
<dbReference type="InterPro" id="IPR005527">
    <property type="entry name" value="MinE"/>
</dbReference>
<dbReference type="InterPro" id="IPR036707">
    <property type="entry name" value="MinE_sf"/>
</dbReference>
<dbReference type="NCBIfam" id="TIGR01215">
    <property type="entry name" value="minE"/>
    <property type="match status" value="1"/>
</dbReference>
<dbReference type="NCBIfam" id="NF001422">
    <property type="entry name" value="PRK00296.1"/>
    <property type="match status" value="1"/>
</dbReference>
<dbReference type="NCBIfam" id="NF010595">
    <property type="entry name" value="PRK13989.1"/>
    <property type="match status" value="1"/>
</dbReference>
<dbReference type="Pfam" id="PF03776">
    <property type="entry name" value="MinE"/>
    <property type="match status" value="1"/>
</dbReference>
<dbReference type="SUPFAM" id="SSF55229">
    <property type="entry name" value="Cell division protein MinE topological specificity domain"/>
    <property type="match status" value="1"/>
</dbReference>
<comment type="function">
    <text evidence="1">Prevents the cell division inhibition by proteins MinC and MinD at internal division sites while permitting inhibition at polar sites. This ensures cell division at the proper site by restricting the formation of a division septum at the midpoint of the long axis of the cell.</text>
</comment>
<comment type="similarity">
    <text evidence="1">Belongs to the MinE family.</text>
</comment>
<keyword id="KW-0131">Cell cycle</keyword>
<keyword id="KW-0132">Cell division</keyword>
<keyword id="KW-1185">Reference proteome</keyword>
<protein>
    <recommendedName>
        <fullName evidence="1">Cell division topological specificity factor</fullName>
    </recommendedName>
</protein>
<proteinExistence type="inferred from homology"/>
<gene>
    <name evidence="1" type="primary">minE</name>
    <name type="ordered locus">Daci_0093</name>
</gene>
<reference key="1">
    <citation type="submission" date="2007-11" db="EMBL/GenBank/DDBJ databases">
        <title>Complete sequence of Delftia acidovorans DSM 14801 / SPH-1.</title>
        <authorList>
            <person name="Copeland A."/>
            <person name="Lucas S."/>
            <person name="Lapidus A."/>
            <person name="Barry K."/>
            <person name="Glavina del Rio T."/>
            <person name="Dalin E."/>
            <person name="Tice H."/>
            <person name="Pitluck S."/>
            <person name="Lowry S."/>
            <person name="Clum A."/>
            <person name="Schmutz J."/>
            <person name="Larimer F."/>
            <person name="Land M."/>
            <person name="Hauser L."/>
            <person name="Kyrpides N."/>
            <person name="Kim E."/>
            <person name="Schleheck D."/>
            <person name="Richardson P."/>
        </authorList>
    </citation>
    <scope>NUCLEOTIDE SEQUENCE [LARGE SCALE GENOMIC DNA]</scope>
    <source>
        <strain>DSM 14801 / SPH-1</strain>
    </source>
</reference>
<feature type="chain" id="PRO_1000114216" description="Cell division topological specificity factor">
    <location>
        <begin position="1"/>
        <end position="87"/>
    </location>
</feature>
<organism>
    <name type="scientific">Delftia acidovorans (strain DSM 14801 / SPH-1)</name>
    <dbReference type="NCBI Taxonomy" id="398578"/>
    <lineage>
        <taxon>Bacteria</taxon>
        <taxon>Pseudomonadati</taxon>
        <taxon>Pseudomonadota</taxon>
        <taxon>Betaproteobacteria</taxon>
        <taxon>Burkholderiales</taxon>
        <taxon>Comamonadaceae</taxon>
        <taxon>Delftia</taxon>
    </lineage>
</organism>
<evidence type="ECO:0000255" key="1">
    <source>
        <dbReference type="HAMAP-Rule" id="MF_00262"/>
    </source>
</evidence>
<accession>A9BQN8</accession>